<keyword id="KW-0067">ATP-binding</keyword>
<keyword id="KW-0963">Cytoplasm</keyword>
<keyword id="KW-0206">Cytoskeleton</keyword>
<keyword id="KW-0243">Dynein</keyword>
<keyword id="KW-0488">Methylation</keyword>
<keyword id="KW-0493">Microtubule</keyword>
<keyword id="KW-0505">Motor protein</keyword>
<keyword id="KW-0547">Nucleotide-binding</keyword>
<keyword id="KW-0597">Phosphoprotein</keyword>
<keyword id="KW-1185">Reference proteome</keyword>
<keyword id="KW-0813">Transport</keyword>
<feature type="chain" id="PRO_0000114672" description="Cytoplasmic dynein 1 light intermediate chain 2">
    <location>
        <begin position="1"/>
        <end position="492"/>
    </location>
</feature>
<feature type="region of interest" description="Disordered" evidence="3">
    <location>
        <begin position="188"/>
        <end position="207"/>
    </location>
</feature>
<feature type="region of interest" description="Disordered" evidence="3">
    <location>
        <begin position="370"/>
        <end position="423"/>
    </location>
</feature>
<feature type="region of interest" description="Disordered" evidence="3">
    <location>
        <begin position="437"/>
        <end position="492"/>
    </location>
</feature>
<feature type="compositionally biased region" description="Polar residues" evidence="3">
    <location>
        <begin position="370"/>
        <end position="383"/>
    </location>
</feature>
<feature type="compositionally biased region" description="Polar residues" evidence="3">
    <location>
        <begin position="437"/>
        <end position="469"/>
    </location>
</feature>
<feature type="compositionally biased region" description="Basic and acidic residues" evidence="3">
    <location>
        <begin position="471"/>
        <end position="480"/>
    </location>
</feature>
<feature type="compositionally biased region" description="Polar residues" evidence="3">
    <location>
        <begin position="482"/>
        <end position="492"/>
    </location>
</feature>
<feature type="binding site" evidence="2">
    <location>
        <begin position="61"/>
        <end position="68"/>
    </location>
    <ligand>
        <name>ATP</name>
        <dbReference type="ChEBI" id="CHEBI:30616"/>
    </ligand>
</feature>
<feature type="modified residue" description="Phosphoserine" evidence="5">
    <location>
        <position position="194"/>
    </location>
</feature>
<feature type="modified residue" description="Phosphoserine" evidence="1">
    <location>
        <position position="383"/>
    </location>
</feature>
<feature type="modified residue" description="Phosphoserine" evidence="1">
    <location>
        <position position="391"/>
    </location>
</feature>
<feature type="modified residue" description="Omega-N-methylarginine" evidence="6">
    <location>
        <position position="397"/>
    </location>
</feature>
<feature type="modified residue" description="Phosphothreonine" evidence="1">
    <location>
        <position position="441"/>
    </location>
</feature>
<feature type="modified residue" description="Phosphoserine" evidence="1">
    <location>
        <position position="443"/>
    </location>
</feature>
<feature type="modified residue" description="Phosphoserine" evidence="5">
    <location>
        <position position="446"/>
    </location>
</feature>
<feature type="sequence conflict" description="In Ref. 2; AAH58645." evidence="4" ref="2">
    <original>E</original>
    <variation>K</variation>
    <location>
        <position position="353"/>
    </location>
</feature>
<evidence type="ECO:0000250" key="1">
    <source>
        <dbReference type="UniProtKB" id="O43237"/>
    </source>
</evidence>
<evidence type="ECO:0000255" key="2"/>
<evidence type="ECO:0000256" key="3">
    <source>
        <dbReference type="SAM" id="MobiDB-lite"/>
    </source>
</evidence>
<evidence type="ECO:0000305" key="4"/>
<evidence type="ECO:0007744" key="5">
    <source>
    </source>
</evidence>
<evidence type="ECO:0007744" key="6">
    <source>
    </source>
</evidence>
<name>DC1L2_MOUSE</name>
<reference key="1">
    <citation type="journal article" date="2005" name="Science">
        <title>The transcriptional landscape of the mammalian genome.</title>
        <authorList>
            <person name="Carninci P."/>
            <person name="Kasukawa T."/>
            <person name="Katayama S."/>
            <person name="Gough J."/>
            <person name="Frith M.C."/>
            <person name="Maeda N."/>
            <person name="Oyama R."/>
            <person name="Ravasi T."/>
            <person name="Lenhard B."/>
            <person name="Wells C."/>
            <person name="Kodzius R."/>
            <person name="Shimokawa K."/>
            <person name="Bajic V.B."/>
            <person name="Brenner S.E."/>
            <person name="Batalov S."/>
            <person name="Forrest A.R."/>
            <person name="Zavolan M."/>
            <person name="Davis M.J."/>
            <person name="Wilming L.G."/>
            <person name="Aidinis V."/>
            <person name="Allen J.E."/>
            <person name="Ambesi-Impiombato A."/>
            <person name="Apweiler R."/>
            <person name="Aturaliya R.N."/>
            <person name="Bailey T.L."/>
            <person name="Bansal M."/>
            <person name="Baxter L."/>
            <person name="Beisel K.W."/>
            <person name="Bersano T."/>
            <person name="Bono H."/>
            <person name="Chalk A.M."/>
            <person name="Chiu K.P."/>
            <person name="Choudhary V."/>
            <person name="Christoffels A."/>
            <person name="Clutterbuck D.R."/>
            <person name="Crowe M.L."/>
            <person name="Dalla E."/>
            <person name="Dalrymple B.P."/>
            <person name="de Bono B."/>
            <person name="Della Gatta G."/>
            <person name="di Bernardo D."/>
            <person name="Down T."/>
            <person name="Engstrom P."/>
            <person name="Fagiolini M."/>
            <person name="Faulkner G."/>
            <person name="Fletcher C.F."/>
            <person name="Fukushima T."/>
            <person name="Furuno M."/>
            <person name="Futaki S."/>
            <person name="Gariboldi M."/>
            <person name="Georgii-Hemming P."/>
            <person name="Gingeras T.R."/>
            <person name="Gojobori T."/>
            <person name="Green R.E."/>
            <person name="Gustincich S."/>
            <person name="Harbers M."/>
            <person name="Hayashi Y."/>
            <person name="Hensch T.K."/>
            <person name="Hirokawa N."/>
            <person name="Hill D."/>
            <person name="Huminiecki L."/>
            <person name="Iacono M."/>
            <person name="Ikeo K."/>
            <person name="Iwama A."/>
            <person name="Ishikawa T."/>
            <person name="Jakt M."/>
            <person name="Kanapin A."/>
            <person name="Katoh M."/>
            <person name="Kawasawa Y."/>
            <person name="Kelso J."/>
            <person name="Kitamura H."/>
            <person name="Kitano H."/>
            <person name="Kollias G."/>
            <person name="Krishnan S.P."/>
            <person name="Kruger A."/>
            <person name="Kummerfeld S.K."/>
            <person name="Kurochkin I.V."/>
            <person name="Lareau L.F."/>
            <person name="Lazarevic D."/>
            <person name="Lipovich L."/>
            <person name="Liu J."/>
            <person name="Liuni S."/>
            <person name="McWilliam S."/>
            <person name="Madan Babu M."/>
            <person name="Madera M."/>
            <person name="Marchionni L."/>
            <person name="Matsuda H."/>
            <person name="Matsuzawa S."/>
            <person name="Miki H."/>
            <person name="Mignone F."/>
            <person name="Miyake S."/>
            <person name="Morris K."/>
            <person name="Mottagui-Tabar S."/>
            <person name="Mulder N."/>
            <person name="Nakano N."/>
            <person name="Nakauchi H."/>
            <person name="Ng P."/>
            <person name="Nilsson R."/>
            <person name="Nishiguchi S."/>
            <person name="Nishikawa S."/>
            <person name="Nori F."/>
            <person name="Ohara O."/>
            <person name="Okazaki Y."/>
            <person name="Orlando V."/>
            <person name="Pang K.C."/>
            <person name="Pavan W.J."/>
            <person name="Pavesi G."/>
            <person name="Pesole G."/>
            <person name="Petrovsky N."/>
            <person name="Piazza S."/>
            <person name="Reed J."/>
            <person name="Reid J.F."/>
            <person name="Ring B.Z."/>
            <person name="Ringwald M."/>
            <person name="Rost B."/>
            <person name="Ruan Y."/>
            <person name="Salzberg S.L."/>
            <person name="Sandelin A."/>
            <person name="Schneider C."/>
            <person name="Schoenbach C."/>
            <person name="Sekiguchi K."/>
            <person name="Semple C.A."/>
            <person name="Seno S."/>
            <person name="Sessa L."/>
            <person name="Sheng Y."/>
            <person name="Shibata Y."/>
            <person name="Shimada H."/>
            <person name="Shimada K."/>
            <person name="Silva D."/>
            <person name="Sinclair B."/>
            <person name="Sperling S."/>
            <person name="Stupka E."/>
            <person name="Sugiura K."/>
            <person name="Sultana R."/>
            <person name="Takenaka Y."/>
            <person name="Taki K."/>
            <person name="Tammoja K."/>
            <person name="Tan S.L."/>
            <person name="Tang S."/>
            <person name="Taylor M.S."/>
            <person name="Tegner J."/>
            <person name="Teichmann S.A."/>
            <person name="Ueda H.R."/>
            <person name="van Nimwegen E."/>
            <person name="Verardo R."/>
            <person name="Wei C.L."/>
            <person name="Yagi K."/>
            <person name="Yamanishi H."/>
            <person name="Zabarovsky E."/>
            <person name="Zhu S."/>
            <person name="Zimmer A."/>
            <person name="Hide W."/>
            <person name="Bult C."/>
            <person name="Grimmond S.M."/>
            <person name="Teasdale R.D."/>
            <person name="Liu E.T."/>
            <person name="Brusic V."/>
            <person name="Quackenbush J."/>
            <person name="Wahlestedt C."/>
            <person name="Mattick J.S."/>
            <person name="Hume D.A."/>
            <person name="Kai C."/>
            <person name="Sasaki D."/>
            <person name="Tomaru Y."/>
            <person name="Fukuda S."/>
            <person name="Kanamori-Katayama M."/>
            <person name="Suzuki M."/>
            <person name="Aoki J."/>
            <person name="Arakawa T."/>
            <person name="Iida J."/>
            <person name="Imamura K."/>
            <person name="Itoh M."/>
            <person name="Kato T."/>
            <person name="Kawaji H."/>
            <person name="Kawagashira N."/>
            <person name="Kawashima T."/>
            <person name="Kojima M."/>
            <person name="Kondo S."/>
            <person name="Konno H."/>
            <person name="Nakano K."/>
            <person name="Ninomiya N."/>
            <person name="Nishio T."/>
            <person name="Okada M."/>
            <person name="Plessy C."/>
            <person name="Shibata K."/>
            <person name="Shiraki T."/>
            <person name="Suzuki S."/>
            <person name="Tagami M."/>
            <person name="Waki K."/>
            <person name="Watahiki A."/>
            <person name="Okamura-Oho Y."/>
            <person name="Suzuki H."/>
            <person name="Kawai J."/>
            <person name="Hayashizaki Y."/>
        </authorList>
    </citation>
    <scope>NUCLEOTIDE SEQUENCE [LARGE SCALE MRNA]</scope>
    <source>
        <strain>C57BL/6J</strain>
        <tissue>Bone marrow</tissue>
        <tissue>Head</tissue>
        <tissue>Testis</tissue>
    </source>
</reference>
<reference key="2">
    <citation type="journal article" date="2004" name="Genome Res.">
        <title>The status, quality, and expansion of the NIH full-length cDNA project: the Mammalian Gene Collection (MGC).</title>
        <authorList>
            <consortium name="The MGC Project Team"/>
        </authorList>
    </citation>
    <scope>NUCLEOTIDE SEQUENCE [LARGE SCALE MRNA]</scope>
    <source>
        <strain>C57BL/6J</strain>
        <tissue>Brain</tissue>
    </source>
</reference>
<reference key="3">
    <citation type="journal article" date="2009" name="Mol. Cell. Proteomics">
        <title>Large scale localization of protein phosphorylation by use of electron capture dissociation mass spectrometry.</title>
        <authorList>
            <person name="Sweet S.M."/>
            <person name="Bailey C.M."/>
            <person name="Cunningham D.L."/>
            <person name="Heath J.K."/>
            <person name="Cooper H.J."/>
        </authorList>
    </citation>
    <scope>IDENTIFICATION BY MASS SPECTROMETRY [LARGE SCALE ANALYSIS]</scope>
    <source>
        <tissue>Embryonic fibroblast</tissue>
    </source>
</reference>
<reference key="4">
    <citation type="journal article" date="2010" name="Cell">
        <title>A tissue-specific atlas of mouse protein phosphorylation and expression.</title>
        <authorList>
            <person name="Huttlin E.L."/>
            <person name="Jedrychowski M.P."/>
            <person name="Elias J.E."/>
            <person name="Goswami T."/>
            <person name="Rad R."/>
            <person name="Beausoleil S.A."/>
            <person name="Villen J."/>
            <person name="Haas W."/>
            <person name="Sowa M.E."/>
            <person name="Gygi S.P."/>
        </authorList>
    </citation>
    <scope>PHOSPHORYLATION [LARGE SCALE ANALYSIS] AT SER-194 AND SER-446</scope>
    <scope>IDENTIFICATION BY MASS SPECTROMETRY [LARGE SCALE ANALYSIS]</scope>
    <source>
        <tissue>Brain</tissue>
        <tissue>Brown adipose tissue</tissue>
        <tissue>Heart</tissue>
        <tissue>Kidney</tissue>
        <tissue>Liver</tissue>
        <tissue>Lung</tissue>
        <tissue>Pancreas</tissue>
        <tissue>Spleen</tissue>
        <tissue>Testis</tissue>
    </source>
</reference>
<reference key="5">
    <citation type="journal article" date="2014" name="Mol. Cell. Proteomics">
        <title>Immunoaffinity enrichment and mass spectrometry analysis of protein methylation.</title>
        <authorList>
            <person name="Guo A."/>
            <person name="Gu H."/>
            <person name="Zhou J."/>
            <person name="Mulhern D."/>
            <person name="Wang Y."/>
            <person name="Lee K.A."/>
            <person name="Yang V."/>
            <person name="Aguiar M."/>
            <person name="Kornhauser J."/>
            <person name="Jia X."/>
            <person name="Ren J."/>
            <person name="Beausoleil S.A."/>
            <person name="Silva J.C."/>
            <person name="Vemulapalli V."/>
            <person name="Bedford M.T."/>
            <person name="Comb M.J."/>
        </authorList>
    </citation>
    <scope>METHYLATION [LARGE SCALE ANALYSIS] AT ARG-397</scope>
    <scope>IDENTIFICATION BY MASS SPECTROMETRY [LARGE SCALE ANALYSIS]</scope>
    <source>
        <tissue>Brain</tissue>
        <tissue>Embryo</tissue>
    </source>
</reference>
<proteinExistence type="evidence at protein level"/>
<comment type="function">
    <text evidence="1">Acts as one of several non-catalytic accessory components of the cytoplasmic dynein 1 complex that are thought to be involved in linking dynein to cargos and to adapter proteins that regulate dynein function. Cytoplasmic dynein 1 acts as a motor for the intracellular retrograde motility of vesicles and organelles along microtubules. May play a role in binding dynein to membranous organelles or chromosomes.</text>
</comment>
<comment type="subunit">
    <text evidence="1">Homodimer. The cytoplasmic dynein 1 complex consists of two catalytic heavy chains (HCs) and a number of non-catalytic subunits presented by intermediate chains (ICs), light intermediate chains (LICs) and light chains (LCs); the composition seems to vary in respect to the IC, LIC and LC composition. The heavy chain homodimer serves as a scaffold for the probable homodimeric assembly of the respective non-catalytic subunits. The ICs and LICs bind directly to the HC dimer and the LCs assemble on the IC dimer. Interacts with DYNC1H1; DYNC1LI1 and DYNC1LI2 bind mutually exclusive to DYNC1H.</text>
</comment>
<comment type="subcellular location">
    <subcellularLocation>
        <location evidence="1">Cytoplasm</location>
        <location evidence="1">Cytoskeleton</location>
    </subcellularLocation>
</comment>
<comment type="similarity">
    <text evidence="4">Belongs to the dynein light intermediate chain family.</text>
</comment>
<organism>
    <name type="scientific">Mus musculus</name>
    <name type="common">Mouse</name>
    <dbReference type="NCBI Taxonomy" id="10090"/>
    <lineage>
        <taxon>Eukaryota</taxon>
        <taxon>Metazoa</taxon>
        <taxon>Chordata</taxon>
        <taxon>Craniata</taxon>
        <taxon>Vertebrata</taxon>
        <taxon>Euteleostomi</taxon>
        <taxon>Mammalia</taxon>
        <taxon>Eutheria</taxon>
        <taxon>Euarchontoglires</taxon>
        <taxon>Glires</taxon>
        <taxon>Rodentia</taxon>
        <taxon>Myomorpha</taxon>
        <taxon>Muroidea</taxon>
        <taxon>Muridae</taxon>
        <taxon>Murinae</taxon>
        <taxon>Mus</taxon>
        <taxon>Mus</taxon>
    </lineage>
</organism>
<sequence>MAPVGVEKKLLLGPNGPAVAAAGDLTSEEEEGQSLWSSILSEVSTRARSKLPSGKNILVFGEDGSGKTTLMTKLQGAEHGKKGRGLEYLYLSVHDEDRDDHTRCNVWILDGDLYHKGLLKFAVSAESLRETLVIFVADMSRPWTIMESLQKWASVLREHIDKMKIPPEEMRDLERKFMKEFQDYIEPEEGCQGSPQRRGPLTSGSDEDSVALPLGDNVLTHNLGIPVLVVCTKCDAMSVLEKEHDYRDEHLDFIQAHLRRFCLQYGAALIYTSVKEEKNLDLLYKYIVHKTYGFHFTIPALVVEKDAVFIPAGWDNEKKIAILHENFTTVKPEDAYEDFIVKPPVRKLVHDKELAAEDEQVFLMKQQSLLAKQPATPTRTSESPARGPSGSPRTQGRGGPASVPSASPGTSVKKPDPNIKNNAASEGVLASFFNSLLSKKTGSPGSPSAGGVQSTAKKSGQKTVLSNVQEELDRMTRKPDSMVTNSSTENEA</sequence>
<accession>Q6PDL0</accession>
<accession>Q3UGJ3</accession>
<protein>
    <recommendedName>
        <fullName>Cytoplasmic dynein 1 light intermediate chain 2</fullName>
    </recommendedName>
    <alternativeName>
        <fullName>Dynein light intermediate chain 2, cytosolic</fullName>
    </alternativeName>
</protein>
<gene>
    <name type="primary">Dync1li2</name>
    <name type="synonym">Dncli2</name>
    <name type="synonym">Dnclic2</name>
</gene>
<dbReference type="EMBL" id="AK140743">
    <property type="protein sequence ID" value="BAE24463.1"/>
    <property type="molecule type" value="mRNA"/>
</dbReference>
<dbReference type="EMBL" id="AK147899">
    <property type="protein sequence ID" value="BAE28215.1"/>
    <property type="molecule type" value="mRNA"/>
</dbReference>
<dbReference type="EMBL" id="AK152157">
    <property type="protein sequence ID" value="BAE30992.1"/>
    <property type="molecule type" value="mRNA"/>
</dbReference>
<dbReference type="EMBL" id="AK161434">
    <property type="protein sequence ID" value="BAE36394.1"/>
    <property type="molecule type" value="mRNA"/>
</dbReference>
<dbReference type="EMBL" id="BC058645">
    <property type="protein sequence ID" value="AAH58645.1"/>
    <property type="molecule type" value="mRNA"/>
</dbReference>
<dbReference type="CCDS" id="CCDS22579.1"/>
<dbReference type="RefSeq" id="NP_001013398.2">
    <property type="nucleotide sequence ID" value="NM_001013380.2"/>
</dbReference>
<dbReference type="SMR" id="Q6PDL0"/>
<dbReference type="BioGRID" id="231551">
    <property type="interactions" value="16"/>
</dbReference>
<dbReference type="ComplexPortal" id="CPX-5699">
    <property type="entry name" value="Cytoplasmic dynein complex, variant 1"/>
</dbReference>
<dbReference type="FunCoup" id="Q6PDL0">
    <property type="interactions" value="3732"/>
</dbReference>
<dbReference type="STRING" id="10090.ENSMUSP00000045480"/>
<dbReference type="GlyGen" id="Q6PDL0">
    <property type="glycosylation" value="1 site, 1 O-linked glycan (1 site)"/>
</dbReference>
<dbReference type="iPTMnet" id="Q6PDL0"/>
<dbReference type="PhosphoSitePlus" id="Q6PDL0"/>
<dbReference type="SwissPalm" id="Q6PDL0"/>
<dbReference type="jPOST" id="Q6PDL0"/>
<dbReference type="PaxDb" id="10090-ENSMUSP00000045480"/>
<dbReference type="PeptideAtlas" id="Q6PDL0"/>
<dbReference type="ProteomicsDB" id="279172"/>
<dbReference type="Pumba" id="Q6PDL0"/>
<dbReference type="Antibodypedia" id="29288">
    <property type="antibodies" value="120 antibodies from 24 providers"/>
</dbReference>
<dbReference type="DNASU" id="234663"/>
<dbReference type="Ensembl" id="ENSMUST00000041769.8">
    <property type="protein sequence ID" value="ENSMUSP00000045480.7"/>
    <property type="gene ID" value="ENSMUSG00000035770.9"/>
</dbReference>
<dbReference type="GeneID" id="234663"/>
<dbReference type="KEGG" id="mmu:234663"/>
<dbReference type="UCSC" id="uc009nao.2">
    <property type="organism name" value="mouse"/>
</dbReference>
<dbReference type="AGR" id="MGI:107738"/>
<dbReference type="CTD" id="1783"/>
<dbReference type="MGI" id="MGI:107738">
    <property type="gene designation" value="Dync1li2"/>
</dbReference>
<dbReference type="VEuPathDB" id="HostDB:ENSMUSG00000035770"/>
<dbReference type="eggNOG" id="KOG3905">
    <property type="taxonomic scope" value="Eukaryota"/>
</dbReference>
<dbReference type="GeneTree" id="ENSGT00390000008295"/>
<dbReference type="HOGENOM" id="CLU_021937_2_1_1"/>
<dbReference type="InParanoid" id="Q6PDL0"/>
<dbReference type="OMA" id="FKHNVID"/>
<dbReference type="OrthoDB" id="27603at2759"/>
<dbReference type="PhylomeDB" id="Q6PDL0"/>
<dbReference type="TreeFam" id="TF352602"/>
<dbReference type="Reactome" id="R-MMU-141444">
    <property type="pathway name" value="Amplification of signal from unattached kinetochores via a MAD2 inhibitory signal"/>
</dbReference>
<dbReference type="Reactome" id="R-MMU-2132295">
    <property type="pathway name" value="MHC class II antigen presentation"/>
</dbReference>
<dbReference type="Reactome" id="R-MMU-2467813">
    <property type="pathway name" value="Separation of Sister Chromatids"/>
</dbReference>
<dbReference type="Reactome" id="R-MMU-2500257">
    <property type="pathway name" value="Resolution of Sister Chromatid Cohesion"/>
</dbReference>
<dbReference type="Reactome" id="R-MMU-3371497">
    <property type="pathway name" value="HSP90 chaperone cycle for steroid hormone receptors (SHR) in the presence of ligand"/>
</dbReference>
<dbReference type="Reactome" id="R-MMU-5663220">
    <property type="pathway name" value="RHO GTPases Activate Formins"/>
</dbReference>
<dbReference type="Reactome" id="R-MMU-6807878">
    <property type="pathway name" value="COPI-mediated anterograde transport"/>
</dbReference>
<dbReference type="Reactome" id="R-MMU-6811436">
    <property type="pathway name" value="COPI-independent Golgi-to-ER retrograde traffic"/>
</dbReference>
<dbReference type="Reactome" id="R-MMU-68877">
    <property type="pathway name" value="Mitotic Prometaphase"/>
</dbReference>
<dbReference type="Reactome" id="R-MMU-9646399">
    <property type="pathway name" value="Aggrephagy"/>
</dbReference>
<dbReference type="Reactome" id="R-MMU-9648025">
    <property type="pathway name" value="EML4 and NUDC in mitotic spindle formation"/>
</dbReference>
<dbReference type="BioGRID-ORCS" id="234663">
    <property type="hits" value="0 hits in 77 CRISPR screens"/>
</dbReference>
<dbReference type="CD-CODE" id="CE726F99">
    <property type="entry name" value="Postsynaptic density"/>
</dbReference>
<dbReference type="ChiTaRS" id="Dync1li2">
    <property type="organism name" value="mouse"/>
</dbReference>
<dbReference type="PRO" id="PR:Q6PDL0"/>
<dbReference type="Proteomes" id="UP000000589">
    <property type="component" value="Chromosome 8"/>
</dbReference>
<dbReference type="RNAct" id="Q6PDL0">
    <property type="molecule type" value="protein"/>
</dbReference>
<dbReference type="Bgee" id="ENSMUSG00000035770">
    <property type="expression patterns" value="Expressed in embryonic brain and 225 other cell types or tissues"/>
</dbReference>
<dbReference type="ExpressionAtlas" id="Q6PDL0">
    <property type="expression patterns" value="baseline and differential"/>
</dbReference>
<dbReference type="GO" id="GO:0005813">
    <property type="term" value="C:centrosome"/>
    <property type="evidence" value="ECO:0007669"/>
    <property type="project" value="Ensembl"/>
</dbReference>
<dbReference type="GO" id="GO:0005868">
    <property type="term" value="C:cytoplasmic dynein complex"/>
    <property type="evidence" value="ECO:0007669"/>
    <property type="project" value="InterPro"/>
</dbReference>
<dbReference type="GO" id="GO:0030286">
    <property type="term" value="C:dynein complex"/>
    <property type="evidence" value="ECO:0000266"/>
    <property type="project" value="ComplexPortal"/>
</dbReference>
<dbReference type="GO" id="GO:0000776">
    <property type="term" value="C:kinetochore"/>
    <property type="evidence" value="ECO:0007669"/>
    <property type="project" value="Ensembl"/>
</dbReference>
<dbReference type="GO" id="GO:0005770">
    <property type="term" value="C:late endosome"/>
    <property type="evidence" value="ECO:0007669"/>
    <property type="project" value="Ensembl"/>
</dbReference>
<dbReference type="GO" id="GO:0005874">
    <property type="term" value="C:microtubule"/>
    <property type="evidence" value="ECO:0007669"/>
    <property type="project" value="UniProtKB-KW"/>
</dbReference>
<dbReference type="GO" id="GO:0005524">
    <property type="term" value="F:ATP binding"/>
    <property type="evidence" value="ECO:0007669"/>
    <property type="project" value="UniProtKB-KW"/>
</dbReference>
<dbReference type="GO" id="GO:0042802">
    <property type="term" value="F:identical protein binding"/>
    <property type="evidence" value="ECO:0007669"/>
    <property type="project" value="Ensembl"/>
</dbReference>
<dbReference type="GO" id="GO:1990090">
    <property type="term" value="P:cellular response to nerve growth factor stimulus"/>
    <property type="evidence" value="ECO:0007669"/>
    <property type="project" value="Ensembl"/>
</dbReference>
<dbReference type="GO" id="GO:0051642">
    <property type="term" value="P:centrosome localization"/>
    <property type="evidence" value="ECO:0000315"/>
    <property type="project" value="MGI"/>
</dbReference>
<dbReference type="GO" id="GO:0000226">
    <property type="term" value="P:microtubule cytoskeleton organization"/>
    <property type="evidence" value="ECO:0000315"/>
    <property type="project" value="MGI"/>
</dbReference>
<dbReference type="GO" id="GO:0007018">
    <property type="term" value="P:microtubule-based movement"/>
    <property type="evidence" value="ECO:0007669"/>
    <property type="project" value="InterPro"/>
</dbReference>
<dbReference type="Gene3D" id="3.40.50.300">
    <property type="entry name" value="P-loop containing nucleotide triphosphate hydrolases"/>
    <property type="match status" value="1"/>
</dbReference>
<dbReference type="InterPro" id="IPR008467">
    <property type="entry name" value="Dynein1_light_intermed_chain"/>
</dbReference>
<dbReference type="InterPro" id="IPR022780">
    <property type="entry name" value="Dynein_light_int_chain"/>
</dbReference>
<dbReference type="InterPro" id="IPR027417">
    <property type="entry name" value="P-loop_NTPase"/>
</dbReference>
<dbReference type="PANTHER" id="PTHR12688:SF1">
    <property type="entry name" value="CYTOPLASMIC DYNEIN 1 LIGHT INTERMEDIATE CHAIN 2"/>
    <property type="match status" value="1"/>
</dbReference>
<dbReference type="PANTHER" id="PTHR12688">
    <property type="entry name" value="DYNEIN LIGHT INTERMEDIATE CHAIN"/>
    <property type="match status" value="1"/>
</dbReference>
<dbReference type="Pfam" id="PF05783">
    <property type="entry name" value="DLIC"/>
    <property type="match status" value="1"/>
</dbReference>
<dbReference type="SUPFAM" id="SSF52540">
    <property type="entry name" value="P-loop containing nucleoside triphosphate hydrolases"/>
    <property type="match status" value="1"/>
</dbReference>